<evidence type="ECO:0000269" key="1">
    <source>
    </source>
</evidence>
<evidence type="ECO:0000269" key="2">
    <source>
    </source>
</evidence>
<evidence type="ECO:0000269" key="3">
    <source>
    </source>
</evidence>
<evidence type="ECO:0007744" key="4">
    <source>
    </source>
</evidence>
<dbReference type="EMBL" id="X77688">
    <property type="protein sequence ID" value="CAA54753.1"/>
    <property type="molecule type" value="Genomic_DNA"/>
</dbReference>
<dbReference type="EMBL" id="Z49479">
    <property type="protein sequence ID" value="CAA89499.1"/>
    <property type="molecule type" value="Genomic_DNA"/>
</dbReference>
<dbReference type="EMBL" id="Z49480">
    <property type="protein sequence ID" value="CAA89501.1"/>
    <property type="molecule type" value="Genomic_DNA"/>
</dbReference>
<dbReference type="EMBL" id="BK006943">
    <property type="protein sequence ID" value="DAA08606.1"/>
    <property type="molecule type" value="Genomic_DNA"/>
</dbReference>
<dbReference type="PIR" id="S77615">
    <property type="entry name" value="S77615"/>
</dbReference>
<dbReference type="RefSeq" id="NP_012331.1">
    <property type="nucleotide sequence ID" value="NM_001181637.1"/>
</dbReference>
<dbReference type="SMR" id="P39531"/>
<dbReference type="BioGRID" id="33554">
    <property type="interactions" value="231"/>
</dbReference>
<dbReference type="DIP" id="DIP-7247N"/>
<dbReference type="FunCoup" id="P39531">
    <property type="interactions" value="85"/>
</dbReference>
<dbReference type="IntAct" id="P39531">
    <property type="interactions" value="4"/>
</dbReference>
<dbReference type="STRING" id="4932.YJL204C"/>
<dbReference type="iPTMnet" id="P39531"/>
<dbReference type="PaxDb" id="4932-YJL204C"/>
<dbReference type="PeptideAtlas" id="P39531"/>
<dbReference type="TopDownProteomics" id="P39531"/>
<dbReference type="EnsemblFungi" id="YJL204C_mRNA">
    <property type="protein sequence ID" value="YJL204C"/>
    <property type="gene ID" value="YJL204C"/>
</dbReference>
<dbReference type="GeneID" id="853226"/>
<dbReference type="KEGG" id="sce:YJL204C"/>
<dbReference type="AGR" id="SGD:S000003740"/>
<dbReference type="SGD" id="S000003740">
    <property type="gene designation" value="RCY1"/>
</dbReference>
<dbReference type="VEuPathDB" id="FungiDB:YJL204C"/>
<dbReference type="eggNOG" id="KOG3745">
    <property type="taxonomic scope" value="Eukaryota"/>
</dbReference>
<dbReference type="GeneTree" id="ENSGT00390000012837"/>
<dbReference type="HOGENOM" id="CLU_003875_1_1_1"/>
<dbReference type="InParanoid" id="P39531"/>
<dbReference type="OMA" id="SNHCFLL"/>
<dbReference type="OrthoDB" id="5554140at2759"/>
<dbReference type="BioCyc" id="YEAST:G3O-31632-MONOMER"/>
<dbReference type="PRO" id="PR:P39531"/>
<dbReference type="Proteomes" id="UP000002311">
    <property type="component" value="Chromosome X"/>
</dbReference>
<dbReference type="RNAct" id="P39531">
    <property type="molecule type" value="protein"/>
</dbReference>
<dbReference type="GO" id="GO:0051286">
    <property type="term" value="C:cell tip"/>
    <property type="evidence" value="ECO:0007669"/>
    <property type="project" value="UniProtKB-SubCell"/>
</dbReference>
<dbReference type="GO" id="GO:0005933">
    <property type="term" value="C:cellular bud"/>
    <property type="evidence" value="ECO:0007005"/>
    <property type="project" value="SGD"/>
</dbReference>
<dbReference type="GO" id="GO:0005935">
    <property type="term" value="C:cellular bud neck"/>
    <property type="evidence" value="ECO:0007669"/>
    <property type="project" value="UniProtKB-SubCell"/>
</dbReference>
<dbReference type="GO" id="GO:0005829">
    <property type="term" value="C:cytosol"/>
    <property type="evidence" value="ECO:0007669"/>
    <property type="project" value="GOC"/>
</dbReference>
<dbReference type="GO" id="GO:0005768">
    <property type="term" value="C:endosome"/>
    <property type="evidence" value="ECO:0000314"/>
    <property type="project" value="SGD"/>
</dbReference>
<dbReference type="GO" id="GO:0000145">
    <property type="term" value="C:exocyst"/>
    <property type="evidence" value="ECO:0000318"/>
    <property type="project" value="GO_Central"/>
</dbReference>
<dbReference type="GO" id="GO:0005794">
    <property type="term" value="C:Golgi apparatus"/>
    <property type="evidence" value="ECO:0000314"/>
    <property type="project" value="SGD"/>
</dbReference>
<dbReference type="GO" id="GO:0030427">
    <property type="term" value="C:site of polarized growth"/>
    <property type="evidence" value="ECO:0000314"/>
    <property type="project" value="SGD"/>
</dbReference>
<dbReference type="GO" id="GO:0000149">
    <property type="term" value="F:SNARE binding"/>
    <property type="evidence" value="ECO:0000315"/>
    <property type="project" value="SGD"/>
</dbReference>
<dbReference type="GO" id="GO:0034498">
    <property type="term" value="P:early endosome to Golgi transport"/>
    <property type="evidence" value="ECO:0000315"/>
    <property type="project" value="SGD"/>
</dbReference>
<dbReference type="GO" id="GO:0032456">
    <property type="term" value="P:endocytic recycling"/>
    <property type="evidence" value="ECO:0000315"/>
    <property type="project" value="SGD"/>
</dbReference>
<dbReference type="GO" id="GO:0006897">
    <property type="term" value="P:endocytosis"/>
    <property type="evidence" value="ECO:0000315"/>
    <property type="project" value="SGD"/>
</dbReference>
<dbReference type="GO" id="GO:0006887">
    <property type="term" value="P:exocytosis"/>
    <property type="evidence" value="ECO:0000318"/>
    <property type="project" value="GO_Central"/>
</dbReference>
<dbReference type="GO" id="GO:0006893">
    <property type="term" value="P:Golgi to plasma membrane transport"/>
    <property type="evidence" value="ECO:0000318"/>
    <property type="project" value="GO_Central"/>
</dbReference>
<dbReference type="GO" id="GO:0015031">
    <property type="term" value="P:protein transport"/>
    <property type="evidence" value="ECO:0007669"/>
    <property type="project" value="UniProtKB-KW"/>
</dbReference>
<dbReference type="CDD" id="cd09917">
    <property type="entry name" value="F-box_SF"/>
    <property type="match status" value="1"/>
</dbReference>
<dbReference type="InterPro" id="IPR009976">
    <property type="entry name" value="Sec10-like"/>
</dbReference>
<dbReference type="InterPro" id="IPR048627">
    <property type="entry name" value="Sec10_HB"/>
</dbReference>
<dbReference type="PANTHER" id="PTHR12100:SF1">
    <property type="entry name" value="RECYCLIN-1"/>
    <property type="match status" value="1"/>
</dbReference>
<dbReference type="PANTHER" id="PTHR12100">
    <property type="entry name" value="SEC10"/>
    <property type="match status" value="1"/>
</dbReference>
<dbReference type="Pfam" id="PF07393">
    <property type="entry name" value="Sec10_HB"/>
    <property type="match status" value="1"/>
</dbReference>
<gene>
    <name type="primary">RCY1</name>
    <name type="ordered locus">YJL204C</name>
    <name type="ORF">J0318</name>
    <name type="ORF">J0320</name>
</gene>
<name>RCY1_YEAST</name>
<protein>
    <recommendedName>
        <fullName>Recyclin-1</fullName>
    </recommendedName>
</protein>
<organism>
    <name type="scientific">Saccharomyces cerevisiae (strain ATCC 204508 / S288c)</name>
    <name type="common">Baker's yeast</name>
    <dbReference type="NCBI Taxonomy" id="559292"/>
    <lineage>
        <taxon>Eukaryota</taxon>
        <taxon>Fungi</taxon>
        <taxon>Dikarya</taxon>
        <taxon>Ascomycota</taxon>
        <taxon>Saccharomycotina</taxon>
        <taxon>Saccharomycetes</taxon>
        <taxon>Saccharomycetales</taxon>
        <taxon>Saccharomycetaceae</taxon>
        <taxon>Saccharomyces</taxon>
    </lineage>
</organism>
<accession>P39531</accession>
<accession>D6VVZ0</accession>
<accession>P39530</accession>
<accession>P87193</accession>
<sequence>MDDLLKVPEIVTNIASYLSTVDYLSFQQVNKRVYAIINGKNDSKYWSLKLTRMGLQQVHSNEEEEITLLDENDNQNSLRIFEIYKSFTAQNSKKIFVKFYRCYNSYARKLYNNNLANFFPTSYSNDPLKQTRILNFIKKYNFSNKNDIETFTRIETNFNILREIFINSVLKESELNYQSNNLAAVARFMKILLISNEESNAIEFFKSKADLPPSLTVLPSNDELFWAEQPREEDSGGSTVIFNSKNLDTFLNQLRDFLNEKIKLADILFKDEFPVILQFIESFIQDILLDILNNILLSYSEFLKENGKDSKANYECVPELYFTFIKKFDTELNDSVNAGANFRKVVRDLLNLYLEPFVVNYMNQTTRVFESLINSQLANYDTQVQDKQREQNAKIYNTLKDQTDASSASNNELPNDLSIITETSKTVPEADSKPSTIHQSVHSTDISNDKLDFLSSFTKIFKFSNNENQRLKQQLQLAYNLNLISNNLQNIKSLISLDLCYKILQETSEKTDQIYKFHTIESLLPLIKLRCQEIFKILITQLNKNHVKPAFEKAILLLQKYNPNEIEQIEIKFNSLSPANTQVEPLVQFTELINIGDIILQMISIFYKNELIPKKIIDKNKDFLNDVIQLKKNFETSIDDFVAEGLNIGINKLMDEISFVFKTLQLPDDYNPPPPSRNSPIRDIKPTKCAIRVVELLSNHCFLLTGATDKGTIDVYQQEIGERFFNEIVKHLKKCFISTEGAIWLICDLNYFYDFIANKLKQKNVVPYFVGLKSIGQLYIISGKDSKELGKLISDLGKFNGIFTQEEIYEFVQRRSDWVRVRKDVEKVMYGLGIRDCCIM</sequence>
<comment type="function">
    <text evidence="1 2">Involved in recycling plasma membrane proteins internalized by endocytosis. Required for recycling of the v-SNARE SNC1.</text>
</comment>
<comment type="subunit">
    <text evidence="2">Interacts with SKP1.</text>
</comment>
<comment type="interaction">
    <interactant intactId="EBI-26224">
        <id>P39531</id>
    </interactant>
    <interactant intactId="EBI-4090">
        <id>P52286</id>
        <label>SKP1</label>
    </interactant>
    <organismsDiffer>false</organismsDiffer>
    <experiments>4</experiments>
</comment>
<comment type="subcellular location">
    <subcellularLocation>
        <location evidence="2">Cytoplasm</location>
    </subcellularLocation>
    <subcellularLocation>
        <location evidence="2">Bud neck</location>
    </subcellularLocation>
    <subcellularLocation>
        <location evidence="2">Cell tip</location>
    </subcellularLocation>
    <text>In unpolarized G1 cells this protein is found in patches in the cytoplasm, while after bud emergence it is concentrated in nascent buds and at the mother-bud neck. Accumulates at the shmoo tips of cells treated with pheromone. Localization depends on an intact actin cytoskeleton and a functional secretory pathway.</text>
</comment>
<comment type="miscellaneous">
    <text evidence="3">Present with 2700 molecules/cell in log phase SD medium.</text>
</comment>
<reference key="1">
    <citation type="journal article" date="1994" name="Yeast">
        <title>The sequence of a 36 kb segment on the left arm of yeast chromosome X identifies 24 open reading frames including NUC1, PRP21 (SPP91), CDC6, CRY2, the gene for S24, a homologue to the aconitase gene ACO1 and two homologues to chromosome III genes.</title>
        <authorList>
            <person name="Purnelle B."/>
            <person name="Coster F."/>
            <person name="Goffeau A."/>
        </authorList>
    </citation>
    <scope>NUCLEOTIDE SEQUENCE [GENOMIC DNA]</scope>
    <source>
        <strain>ATCC 204508 / S288c</strain>
    </source>
</reference>
<reference key="2">
    <citation type="submission" date="1997-05" db="EMBL/GenBank/DDBJ databases">
        <authorList>
            <person name="Purnelle B."/>
        </authorList>
    </citation>
    <scope>SEQUENCE REVISION</scope>
</reference>
<reference key="3">
    <citation type="journal article" date="1996" name="EMBO J.">
        <title>Complete nucleotide sequence of Saccharomyces cerevisiae chromosome X.</title>
        <authorList>
            <person name="Galibert F."/>
            <person name="Alexandraki D."/>
            <person name="Baur A."/>
            <person name="Boles E."/>
            <person name="Chalwatzis N."/>
            <person name="Chuat J.-C."/>
            <person name="Coster F."/>
            <person name="Cziepluch C."/>
            <person name="de Haan M."/>
            <person name="Domdey H."/>
            <person name="Durand P."/>
            <person name="Entian K.-D."/>
            <person name="Gatius M."/>
            <person name="Goffeau A."/>
            <person name="Grivell L.A."/>
            <person name="Hennemann A."/>
            <person name="Herbert C.J."/>
            <person name="Heumann K."/>
            <person name="Hilger F."/>
            <person name="Hollenberg C.P."/>
            <person name="Huang M.-E."/>
            <person name="Jacq C."/>
            <person name="Jauniaux J.-C."/>
            <person name="Katsoulou C."/>
            <person name="Kirchrath L."/>
            <person name="Kleine K."/>
            <person name="Kordes E."/>
            <person name="Koetter P."/>
            <person name="Liebl S."/>
            <person name="Louis E.J."/>
            <person name="Manus V."/>
            <person name="Mewes H.-W."/>
            <person name="Miosga T."/>
            <person name="Obermaier B."/>
            <person name="Perea J."/>
            <person name="Pohl T.M."/>
            <person name="Portetelle D."/>
            <person name="Pujol A."/>
            <person name="Purnelle B."/>
            <person name="Ramezani Rad M."/>
            <person name="Rasmussen S.W."/>
            <person name="Rose M."/>
            <person name="Rossau R."/>
            <person name="Schaaff-Gerstenschlaeger I."/>
            <person name="Smits P.H.M."/>
            <person name="Scarcez T."/>
            <person name="Soriano N."/>
            <person name="To Van D."/>
            <person name="Tzermia M."/>
            <person name="Van Broekhoven A."/>
            <person name="Vandenbol M."/>
            <person name="Wedler H."/>
            <person name="von Wettstein D."/>
            <person name="Wambutt R."/>
            <person name="Zagulski M."/>
            <person name="Zollner A."/>
            <person name="Karpfinger-Hartl L."/>
        </authorList>
    </citation>
    <scope>NUCLEOTIDE SEQUENCE [LARGE SCALE GENOMIC DNA]</scope>
    <source>
        <strain>ATCC 204508 / S288c</strain>
    </source>
</reference>
<reference key="4">
    <citation type="journal article" date="2014" name="G3 (Bethesda)">
        <title>The reference genome sequence of Saccharomyces cerevisiae: Then and now.</title>
        <authorList>
            <person name="Engel S.R."/>
            <person name="Dietrich F.S."/>
            <person name="Fisk D.G."/>
            <person name="Binkley G."/>
            <person name="Balakrishnan R."/>
            <person name="Costanzo M.C."/>
            <person name="Dwight S.S."/>
            <person name="Hitz B.C."/>
            <person name="Karra K."/>
            <person name="Nash R.S."/>
            <person name="Weng S."/>
            <person name="Wong E.D."/>
            <person name="Lloyd P."/>
            <person name="Skrzypek M.S."/>
            <person name="Miyasato S.R."/>
            <person name="Simison M."/>
            <person name="Cherry J.M."/>
        </authorList>
    </citation>
    <scope>GENOME REANNOTATION</scope>
    <source>
        <strain>ATCC 204508 / S288c</strain>
    </source>
</reference>
<reference key="5">
    <citation type="journal article" date="2000" name="J. Cell Biol.">
        <title>The F-box protein Rcy1p is involved in endocytic membrane traffic and recycling out of an early endosome in Saccharomyces cerevisiae.</title>
        <authorList>
            <person name="Wiederkehr A."/>
            <person name="Avaro S."/>
            <person name="Prescianotto-Baschong C."/>
            <person name="Haguenauer-Tsapis R."/>
            <person name="Riezman H."/>
        </authorList>
    </citation>
    <scope>FUNCTION</scope>
</reference>
<reference key="6">
    <citation type="journal article" date="2001" name="Mol. Cell. Biol.">
        <title>Skp1p and the F-box protein Rcy1p form a non-SCF complex involved in recycling of the SNARE Snc1p in yeast.</title>
        <authorList>
            <person name="Galan J.M."/>
            <person name="Wiederkehr A."/>
            <person name="Seol J.H."/>
            <person name="Haguenauer-Tsapis R."/>
            <person name="Deshaies R.J."/>
            <person name="Riezman H."/>
            <person name="Peter M."/>
        </authorList>
    </citation>
    <scope>FUNCTION</scope>
    <scope>SUBCELLULAR LOCATION</scope>
    <scope>INTERACTION WITH SKP1</scope>
</reference>
<reference key="7">
    <citation type="journal article" date="2003" name="Nature">
        <title>Global analysis of protein expression in yeast.</title>
        <authorList>
            <person name="Ghaemmaghami S."/>
            <person name="Huh W.-K."/>
            <person name="Bower K."/>
            <person name="Howson R.W."/>
            <person name="Belle A."/>
            <person name="Dephoure N."/>
            <person name="O'Shea E.K."/>
            <person name="Weissman J.S."/>
        </authorList>
    </citation>
    <scope>LEVEL OF PROTEIN EXPRESSION [LARGE SCALE ANALYSIS]</scope>
</reference>
<reference key="8">
    <citation type="journal article" date="2008" name="Mol. Cell. Proteomics">
        <title>A multidimensional chromatography technology for in-depth phosphoproteome analysis.</title>
        <authorList>
            <person name="Albuquerque C.P."/>
            <person name="Smolka M.B."/>
            <person name="Payne S.H."/>
            <person name="Bafna V."/>
            <person name="Eng J."/>
            <person name="Zhou H."/>
        </authorList>
    </citation>
    <scope>IDENTIFICATION BY MASS SPECTROMETRY [LARGE SCALE ANALYSIS]</scope>
</reference>
<reference key="9">
    <citation type="journal article" date="2009" name="Science">
        <title>Global analysis of Cdk1 substrate phosphorylation sites provides insights into evolution.</title>
        <authorList>
            <person name="Holt L.J."/>
            <person name="Tuch B.B."/>
            <person name="Villen J."/>
            <person name="Johnson A.D."/>
            <person name="Gygi S.P."/>
            <person name="Morgan D.O."/>
        </authorList>
    </citation>
    <scope>PHOSPHORYLATION [LARGE SCALE ANALYSIS] AT SER-409</scope>
    <scope>IDENTIFICATION BY MASS SPECTROMETRY [LARGE SCALE ANALYSIS]</scope>
</reference>
<proteinExistence type="evidence at protein level"/>
<feature type="chain" id="PRO_0000119953" description="Recyclin-1">
    <location>
        <begin position="1"/>
        <end position="840"/>
    </location>
</feature>
<feature type="domain" description="F-box">
    <location>
        <begin position="1"/>
        <end position="48"/>
    </location>
</feature>
<feature type="modified residue" description="Phosphoserine" evidence="4">
    <location>
        <position position="409"/>
    </location>
</feature>
<keyword id="KW-0963">Cytoplasm</keyword>
<keyword id="KW-0597">Phosphoprotein</keyword>
<keyword id="KW-0653">Protein transport</keyword>
<keyword id="KW-1185">Reference proteome</keyword>
<keyword id="KW-0813">Transport</keyword>